<reference key="1">
    <citation type="journal article" date="2001" name="Science">
        <title>Genome sequence of the plant pathogen and biotechnology agent Agrobacterium tumefaciens C58.</title>
        <authorList>
            <person name="Goodner B."/>
            <person name="Hinkle G."/>
            <person name="Gattung S."/>
            <person name="Miller N."/>
            <person name="Blanchard M."/>
            <person name="Qurollo B."/>
            <person name="Goldman B.S."/>
            <person name="Cao Y."/>
            <person name="Askenazi M."/>
            <person name="Halling C."/>
            <person name="Mullin L."/>
            <person name="Houmiel K."/>
            <person name="Gordon J."/>
            <person name="Vaudin M."/>
            <person name="Iartchouk O."/>
            <person name="Epp A."/>
            <person name="Liu F."/>
            <person name="Wollam C."/>
            <person name="Allinger M."/>
            <person name="Doughty D."/>
            <person name="Scott C."/>
            <person name="Lappas C."/>
            <person name="Markelz B."/>
            <person name="Flanagan C."/>
            <person name="Crowell C."/>
            <person name="Gurson J."/>
            <person name="Lomo C."/>
            <person name="Sear C."/>
            <person name="Strub G."/>
            <person name="Cielo C."/>
            <person name="Slater S."/>
        </authorList>
    </citation>
    <scope>NUCLEOTIDE SEQUENCE [LARGE SCALE GENOMIC DNA]</scope>
    <source>
        <strain>C58 / ATCC 33970</strain>
    </source>
</reference>
<reference key="2">
    <citation type="journal article" date="2001" name="Science">
        <title>The genome of the natural genetic engineer Agrobacterium tumefaciens C58.</title>
        <authorList>
            <person name="Wood D.W."/>
            <person name="Setubal J.C."/>
            <person name="Kaul R."/>
            <person name="Monks D.E."/>
            <person name="Kitajima J.P."/>
            <person name="Okura V.K."/>
            <person name="Zhou Y."/>
            <person name="Chen L."/>
            <person name="Wood G.E."/>
            <person name="Almeida N.F. Jr."/>
            <person name="Woo L."/>
            <person name="Chen Y."/>
            <person name="Paulsen I.T."/>
            <person name="Eisen J.A."/>
            <person name="Karp P.D."/>
            <person name="Bovee D. Sr."/>
            <person name="Chapman P."/>
            <person name="Clendenning J."/>
            <person name="Deatherage G."/>
            <person name="Gillet W."/>
            <person name="Grant C."/>
            <person name="Kutyavin T."/>
            <person name="Levy R."/>
            <person name="Li M.-J."/>
            <person name="McClelland E."/>
            <person name="Palmieri A."/>
            <person name="Raymond C."/>
            <person name="Rouse G."/>
            <person name="Saenphimmachak C."/>
            <person name="Wu Z."/>
            <person name="Romero P."/>
            <person name="Gordon D."/>
            <person name="Zhang S."/>
            <person name="Yoo H."/>
            <person name="Tao Y."/>
            <person name="Biddle P."/>
            <person name="Jung M."/>
            <person name="Krespan W."/>
            <person name="Perry M."/>
            <person name="Gordon-Kamm B."/>
            <person name="Liao L."/>
            <person name="Kim S."/>
            <person name="Hendrick C."/>
            <person name="Zhao Z.-Y."/>
            <person name="Dolan M."/>
            <person name="Chumley F."/>
            <person name="Tingey S.V."/>
            <person name="Tomb J.-F."/>
            <person name="Gordon M.P."/>
            <person name="Olson M.V."/>
            <person name="Nester E.W."/>
        </authorList>
    </citation>
    <scope>NUCLEOTIDE SEQUENCE [LARGE SCALE GENOMIC DNA]</scope>
    <source>
        <strain>C58 / ATCC 33970</strain>
    </source>
</reference>
<keyword id="KW-0997">Cell inner membrane</keyword>
<keyword id="KW-1003">Cell membrane</keyword>
<keyword id="KW-0472">Membrane</keyword>
<keyword id="KW-0520">NAD</keyword>
<keyword id="KW-0874">Quinone</keyword>
<keyword id="KW-1185">Reference proteome</keyword>
<keyword id="KW-1278">Translocase</keyword>
<keyword id="KW-0812">Transmembrane</keyword>
<keyword id="KW-1133">Transmembrane helix</keyword>
<keyword id="KW-0813">Transport</keyword>
<keyword id="KW-0830">Ubiquinone</keyword>
<gene>
    <name evidence="1" type="primary">nuoK</name>
    <name type="ordered locus">Atu1280</name>
    <name type="ORF">AGR_C_2359</name>
</gene>
<feature type="chain" id="PRO_0000389922" description="NADH-quinone oxidoreductase subunit K">
    <location>
        <begin position="1"/>
        <end position="102"/>
    </location>
</feature>
<feature type="transmembrane region" description="Helical" evidence="1">
    <location>
        <begin position="5"/>
        <end position="25"/>
    </location>
</feature>
<feature type="transmembrane region" description="Helical" evidence="1">
    <location>
        <begin position="31"/>
        <end position="51"/>
    </location>
</feature>
<feature type="transmembrane region" description="Helical" evidence="1">
    <location>
        <begin position="65"/>
        <end position="85"/>
    </location>
</feature>
<comment type="function">
    <text evidence="1">NDH-1 shuttles electrons from NADH, via FMN and iron-sulfur (Fe-S) centers, to quinones in the respiratory chain. The immediate electron acceptor for the enzyme in this species is believed to be ubiquinone. Couples the redox reaction to proton translocation (for every two electrons transferred, four hydrogen ions are translocated across the cytoplasmic membrane), and thus conserves the redox energy in a proton gradient.</text>
</comment>
<comment type="catalytic activity">
    <reaction evidence="1">
        <text>a quinone + NADH + 5 H(+)(in) = a quinol + NAD(+) + 4 H(+)(out)</text>
        <dbReference type="Rhea" id="RHEA:57888"/>
        <dbReference type="ChEBI" id="CHEBI:15378"/>
        <dbReference type="ChEBI" id="CHEBI:24646"/>
        <dbReference type="ChEBI" id="CHEBI:57540"/>
        <dbReference type="ChEBI" id="CHEBI:57945"/>
        <dbReference type="ChEBI" id="CHEBI:132124"/>
    </reaction>
</comment>
<comment type="subunit">
    <text evidence="1">NDH-1 is composed of 14 different subunits. Subunits NuoA, H, J, K, L, M, N constitute the membrane sector of the complex.</text>
</comment>
<comment type="subcellular location">
    <subcellularLocation>
        <location evidence="1">Cell inner membrane</location>
        <topology evidence="1">Multi-pass membrane protein</topology>
    </subcellularLocation>
</comment>
<comment type="similarity">
    <text evidence="1">Belongs to the complex I subunit 4L family.</text>
</comment>
<evidence type="ECO:0000255" key="1">
    <source>
        <dbReference type="HAMAP-Rule" id="MF_01456"/>
    </source>
</evidence>
<proteinExistence type="inferred from homology"/>
<sequence>MVIGLSHYLTVSAILFTIGVFGIFLNRKNVIVILMSIELILLAVNINMVAFSAFLNDIVGQVFALFILTVAAAEAAIGLAILVVFYRNRGSIAVEDVNMMKG</sequence>
<organism>
    <name type="scientific">Agrobacterium fabrum (strain C58 / ATCC 33970)</name>
    <name type="common">Agrobacterium tumefaciens (strain C58)</name>
    <dbReference type="NCBI Taxonomy" id="176299"/>
    <lineage>
        <taxon>Bacteria</taxon>
        <taxon>Pseudomonadati</taxon>
        <taxon>Pseudomonadota</taxon>
        <taxon>Alphaproteobacteria</taxon>
        <taxon>Hyphomicrobiales</taxon>
        <taxon>Rhizobiaceae</taxon>
        <taxon>Rhizobium/Agrobacterium group</taxon>
        <taxon>Agrobacterium</taxon>
        <taxon>Agrobacterium tumefaciens complex</taxon>
    </lineage>
</organism>
<name>NUOK_AGRFC</name>
<dbReference type="EC" id="7.1.1.-" evidence="1"/>
<dbReference type="EMBL" id="AE007869">
    <property type="protein sequence ID" value="AAK87075.1"/>
    <property type="molecule type" value="Genomic_DNA"/>
</dbReference>
<dbReference type="PIR" id="AH2733">
    <property type="entry name" value="AH2733"/>
</dbReference>
<dbReference type="PIR" id="B97515">
    <property type="entry name" value="B97515"/>
</dbReference>
<dbReference type="RefSeq" id="NP_354290.1">
    <property type="nucleotide sequence ID" value="NC_003062.2"/>
</dbReference>
<dbReference type="RefSeq" id="WP_003502389.1">
    <property type="nucleotide sequence ID" value="NC_003062.2"/>
</dbReference>
<dbReference type="SMR" id="A9CJA4"/>
<dbReference type="STRING" id="176299.Atu1280"/>
<dbReference type="EnsemblBacteria" id="AAK87075">
    <property type="protein sequence ID" value="AAK87075"/>
    <property type="gene ID" value="Atu1280"/>
</dbReference>
<dbReference type="GeneID" id="92923150"/>
<dbReference type="GeneID" id="97364076"/>
<dbReference type="KEGG" id="atu:Atu1280"/>
<dbReference type="PATRIC" id="fig|176299.10.peg.1297"/>
<dbReference type="eggNOG" id="COG0713">
    <property type="taxonomic scope" value="Bacteria"/>
</dbReference>
<dbReference type="HOGENOM" id="CLU_144724_2_0_5"/>
<dbReference type="OrthoDB" id="9811124at2"/>
<dbReference type="PhylomeDB" id="A9CJA4"/>
<dbReference type="BioCyc" id="AGRO:ATU1280-MONOMER"/>
<dbReference type="Proteomes" id="UP000000813">
    <property type="component" value="Chromosome circular"/>
</dbReference>
<dbReference type="GO" id="GO:0030964">
    <property type="term" value="C:NADH dehydrogenase complex"/>
    <property type="evidence" value="ECO:0007669"/>
    <property type="project" value="TreeGrafter"/>
</dbReference>
<dbReference type="GO" id="GO:0005886">
    <property type="term" value="C:plasma membrane"/>
    <property type="evidence" value="ECO:0007669"/>
    <property type="project" value="UniProtKB-SubCell"/>
</dbReference>
<dbReference type="GO" id="GO:0050136">
    <property type="term" value="F:NADH:ubiquinone reductase (non-electrogenic) activity"/>
    <property type="evidence" value="ECO:0007669"/>
    <property type="project" value="UniProtKB-UniRule"/>
</dbReference>
<dbReference type="GO" id="GO:0048038">
    <property type="term" value="F:quinone binding"/>
    <property type="evidence" value="ECO:0007669"/>
    <property type="project" value="UniProtKB-KW"/>
</dbReference>
<dbReference type="GO" id="GO:0042773">
    <property type="term" value="P:ATP synthesis coupled electron transport"/>
    <property type="evidence" value="ECO:0007669"/>
    <property type="project" value="InterPro"/>
</dbReference>
<dbReference type="FunFam" id="1.10.287.3510:FF:000001">
    <property type="entry name" value="NADH-quinone oxidoreductase subunit K"/>
    <property type="match status" value="1"/>
</dbReference>
<dbReference type="Gene3D" id="1.10.287.3510">
    <property type="match status" value="1"/>
</dbReference>
<dbReference type="HAMAP" id="MF_01456">
    <property type="entry name" value="NDH1_NuoK"/>
    <property type="match status" value="1"/>
</dbReference>
<dbReference type="InterPro" id="IPR001133">
    <property type="entry name" value="NADH_UbQ_OxRdtase_chain4L/K"/>
</dbReference>
<dbReference type="InterPro" id="IPR039428">
    <property type="entry name" value="NUOK/Mnh_C1-like"/>
</dbReference>
<dbReference type="NCBIfam" id="NF004320">
    <property type="entry name" value="PRK05715.1-2"/>
    <property type="match status" value="1"/>
</dbReference>
<dbReference type="NCBIfam" id="NF004321">
    <property type="entry name" value="PRK05715.1-3"/>
    <property type="match status" value="1"/>
</dbReference>
<dbReference type="NCBIfam" id="NF004323">
    <property type="entry name" value="PRK05715.1-5"/>
    <property type="match status" value="1"/>
</dbReference>
<dbReference type="PANTHER" id="PTHR11434:SF21">
    <property type="entry name" value="NADH DEHYDROGENASE SUBUNIT 4L-RELATED"/>
    <property type="match status" value="1"/>
</dbReference>
<dbReference type="PANTHER" id="PTHR11434">
    <property type="entry name" value="NADH-UBIQUINONE OXIDOREDUCTASE SUBUNIT ND4L"/>
    <property type="match status" value="1"/>
</dbReference>
<dbReference type="Pfam" id="PF00420">
    <property type="entry name" value="Oxidored_q2"/>
    <property type="match status" value="1"/>
</dbReference>
<accession>A9CJA4</accession>
<protein>
    <recommendedName>
        <fullName evidence="1">NADH-quinone oxidoreductase subunit K</fullName>
        <ecNumber evidence="1">7.1.1.-</ecNumber>
    </recommendedName>
    <alternativeName>
        <fullName evidence="1">NADH dehydrogenase I subunit K</fullName>
    </alternativeName>
    <alternativeName>
        <fullName evidence="1">NDH-1 subunit K</fullName>
    </alternativeName>
</protein>